<reference key="1">
    <citation type="journal article" date="2010" name="Genome Biol. Evol.">
        <title>Continuing evolution of Burkholderia mallei through genome reduction and large-scale rearrangements.</title>
        <authorList>
            <person name="Losada L."/>
            <person name="Ronning C.M."/>
            <person name="DeShazer D."/>
            <person name="Woods D."/>
            <person name="Fedorova N."/>
            <person name="Kim H.S."/>
            <person name="Shabalina S.A."/>
            <person name="Pearson T.R."/>
            <person name="Brinkac L."/>
            <person name="Tan P."/>
            <person name="Nandi T."/>
            <person name="Crabtree J."/>
            <person name="Badger J."/>
            <person name="Beckstrom-Sternberg S."/>
            <person name="Saqib M."/>
            <person name="Schutzer S.E."/>
            <person name="Keim P."/>
            <person name="Nierman W.C."/>
        </authorList>
    </citation>
    <scope>NUCLEOTIDE SEQUENCE [LARGE SCALE GENOMIC DNA]</scope>
    <source>
        <strain>NCTC 10247</strain>
    </source>
</reference>
<gene>
    <name evidence="1" type="primary">ureG</name>
    <name type="ordered locus">BMA10247_2060</name>
</gene>
<comment type="function">
    <text evidence="1">Facilitates the functional incorporation of the urease nickel metallocenter. This process requires GTP hydrolysis, probably effectuated by UreG.</text>
</comment>
<comment type="subunit">
    <text evidence="1">Homodimer. UreD, UreF and UreG form a complex that acts as a GTP-hydrolysis-dependent molecular chaperone, activating the urease apoprotein by helping to assemble the nickel containing metallocenter of UreC. The UreE protein probably delivers the nickel.</text>
</comment>
<comment type="subcellular location">
    <subcellularLocation>
        <location evidence="1">Cytoplasm</location>
    </subcellularLocation>
</comment>
<comment type="similarity">
    <text evidence="1">Belongs to the SIMIBI class G3E GTPase family. UreG subfamily.</text>
</comment>
<name>UREG_BURM7</name>
<feature type="chain" id="PRO_0000347372" description="Urease accessory protein UreG">
    <location>
        <begin position="1"/>
        <end position="216"/>
    </location>
</feature>
<feature type="binding site" evidence="1">
    <location>
        <begin position="25"/>
        <end position="32"/>
    </location>
    <ligand>
        <name>GTP</name>
        <dbReference type="ChEBI" id="CHEBI:37565"/>
    </ligand>
</feature>
<sequence length="216" mass="23193">MNAPRFAAPARRTKKLPPLRVGIGGPVGSGKTTLLEMLCKGMRERYDLVAITNDIYTKEDQRLLTIAGALPEARIMGVETGGCPHTAIREDASINLEAVERMLARFPDADIVFIESGGDNLAATFSPELSDLTIYVIDVAGGEKIPRKGGPGITKSDLLVINKTDLAPLVGANLEVMASDTRKMRGERPYVMCNLKALDGVADVIAFIENKGLLTV</sequence>
<proteinExistence type="inferred from homology"/>
<evidence type="ECO:0000255" key="1">
    <source>
        <dbReference type="HAMAP-Rule" id="MF_01389"/>
    </source>
</evidence>
<accession>A3MMV5</accession>
<protein>
    <recommendedName>
        <fullName evidence="1">Urease accessory protein UreG</fullName>
    </recommendedName>
</protein>
<dbReference type="EMBL" id="CP000548">
    <property type="protein sequence ID" value="ABO04494.1"/>
    <property type="molecule type" value="Genomic_DNA"/>
</dbReference>
<dbReference type="RefSeq" id="WP_004185810.1">
    <property type="nucleotide sequence ID" value="NZ_CP007802.1"/>
</dbReference>
<dbReference type="SMR" id="A3MMV5"/>
<dbReference type="GeneID" id="92979890"/>
<dbReference type="KEGG" id="bmaz:BM44_1167"/>
<dbReference type="KEGG" id="bmn:BMA10247_2060"/>
<dbReference type="PATRIC" id="fig|320389.8.peg.1303"/>
<dbReference type="GO" id="GO:0005737">
    <property type="term" value="C:cytoplasm"/>
    <property type="evidence" value="ECO:0007669"/>
    <property type="project" value="UniProtKB-SubCell"/>
</dbReference>
<dbReference type="GO" id="GO:0005525">
    <property type="term" value="F:GTP binding"/>
    <property type="evidence" value="ECO:0007669"/>
    <property type="project" value="UniProtKB-KW"/>
</dbReference>
<dbReference type="GO" id="GO:0003924">
    <property type="term" value="F:GTPase activity"/>
    <property type="evidence" value="ECO:0007669"/>
    <property type="project" value="InterPro"/>
</dbReference>
<dbReference type="GO" id="GO:0016151">
    <property type="term" value="F:nickel cation binding"/>
    <property type="evidence" value="ECO:0007669"/>
    <property type="project" value="UniProtKB-UniRule"/>
</dbReference>
<dbReference type="GO" id="GO:0043419">
    <property type="term" value="P:urea catabolic process"/>
    <property type="evidence" value="ECO:0007669"/>
    <property type="project" value="InterPro"/>
</dbReference>
<dbReference type="CDD" id="cd05540">
    <property type="entry name" value="UreG"/>
    <property type="match status" value="1"/>
</dbReference>
<dbReference type="FunFam" id="3.40.50.300:FF:000208">
    <property type="entry name" value="Urease accessory protein UreG"/>
    <property type="match status" value="1"/>
</dbReference>
<dbReference type="Gene3D" id="3.40.50.300">
    <property type="entry name" value="P-loop containing nucleotide triphosphate hydrolases"/>
    <property type="match status" value="1"/>
</dbReference>
<dbReference type="HAMAP" id="MF_01389">
    <property type="entry name" value="UreG"/>
    <property type="match status" value="1"/>
</dbReference>
<dbReference type="InterPro" id="IPR003495">
    <property type="entry name" value="CobW/HypB/UreG_nucleotide-bd"/>
</dbReference>
<dbReference type="InterPro" id="IPR027417">
    <property type="entry name" value="P-loop_NTPase"/>
</dbReference>
<dbReference type="InterPro" id="IPR004400">
    <property type="entry name" value="UreG"/>
</dbReference>
<dbReference type="NCBIfam" id="TIGR00101">
    <property type="entry name" value="ureG"/>
    <property type="match status" value="1"/>
</dbReference>
<dbReference type="PANTHER" id="PTHR31715">
    <property type="entry name" value="UREASE ACCESSORY PROTEIN G"/>
    <property type="match status" value="1"/>
</dbReference>
<dbReference type="PANTHER" id="PTHR31715:SF0">
    <property type="entry name" value="UREASE ACCESSORY PROTEIN G"/>
    <property type="match status" value="1"/>
</dbReference>
<dbReference type="Pfam" id="PF02492">
    <property type="entry name" value="cobW"/>
    <property type="match status" value="1"/>
</dbReference>
<dbReference type="PIRSF" id="PIRSF005624">
    <property type="entry name" value="Ni-bind_GTPase"/>
    <property type="match status" value="1"/>
</dbReference>
<dbReference type="SUPFAM" id="SSF52540">
    <property type="entry name" value="P-loop containing nucleoside triphosphate hydrolases"/>
    <property type="match status" value="1"/>
</dbReference>
<organism>
    <name type="scientific">Burkholderia mallei (strain NCTC 10247)</name>
    <dbReference type="NCBI Taxonomy" id="320389"/>
    <lineage>
        <taxon>Bacteria</taxon>
        <taxon>Pseudomonadati</taxon>
        <taxon>Pseudomonadota</taxon>
        <taxon>Betaproteobacteria</taxon>
        <taxon>Burkholderiales</taxon>
        <taxon>Burkholderiaceae</taxon>
        <taxon>Burkholderia</taxon>
        <taxon>pseudomallei group</taxon>
    </lineage>
</organism>
<keyword id="KW-0143">Chaperone</keyword>
<keyword id="KW-0963">Cytoplasm</keyword>
<keyword id="KW-0342">GTP-binding</keyword>
<keyword id="KW-0996">Nickel insertion</keyword>
<keyword id="KW-0547">Nucleotide-binding</keyword>